<feature type="chain" id="PRO_1000002172" description="SsrA-binding protein">
    <location>
        <begin position="1"/>
        <end position="154"/>
    </location>
</feature>
<evidence type="ECO:0000255" key="1">
    <source>
        <dbReference type="HAMAP-Rule" id="MF_00023"/>
    </source>
</evidence>
<organism>
    <name type="scientific">Streptococcus thermophilus (strain ATCC BAA-491 / LMD-9)</name>
    <dbReference type="NCBI Taxonomy" id="322159"/>
    <lineage>
        <taxon>Bacteria</taxon>
        <taxon>Bacillati</taxon>
        <taxon>Bacillota</taxon>
        <taxon>Bacilli</taxon>
        <taxon>Lactobacillales</taxon>
        <taxon>Streptococcaceae</taxon>
        <taxon>Streptococcus</taxon>
    </lineage>
</organism>
<sequence length="154" mass="17555">MPKGEGNVVAQNKKARHDYSIVDTIEAGIVLTGTEIKSVRAARIQLKDGYAQIKNGEAWLINVHIAPFEQGNIWNQDPERTRKLLLKKKQITKLQNDLKGTGMTLVPLKVYLKNGFAKVLLGIAKGKHDYDKRESIKRREQERDIKRIIKSVNR</sequence>
<name>SSRP_STRTD</name>
<comment type="function">
    <text evidence="1">Required for rescue of stalled ribosomes mediated by trans-translation. Binds to transfer-messenger RNA (tmRNA), required for stable association of tmRNA with ribosomes. tmRNA and SmpB together mimic tRNA shape, replacing the anticodon stem-loop with SmpB. tmRNA is encoded by the ssrA gene; the 2 termini fold to resemble tRNA(Ala) and it encodes a 'tag peptide', a short internal open reading frame. During trans-translation Ala-aminoacylated tmRNA acts like a tRNA, entering the A-site of stalled ribosomes, displacing the stalled mRNA. The ribosome then switches to translate the ORF on the tmRNA; the nascent peptide is terminated with the 'tag peptide' encoded by the tmRNA and targeted for degradation. The ribosome is freed to recommence translation, which seems to be the essential function of trans-translation.</text>
</comment>
<comment type="subcellular location">
    <subcellularLocation>
        <location evidence="1">Cytoplasm</location>
    </subcellularLocation>
    <text evidence="1">The tmRNA-SmpB complex associates with stalled 70S ribosomes.</text>
</comment>
<comment type="similarity">
    <text evidence="1">Belongs to the SmpB family.</text>
</comment>
<gene>
    <name evidence="1" type="primary">smpB</name>
    <name type="ordered locus">STER_0675</name>
</gene>
<proteinExistence type="inferred from homology"/>
<keyword id="KW-0963">Cytoplasm</keyword>
<keyword id="KW-0694">RNA-binding</keyword>
<protein>
    <recommendedName>
        <fullName evidence="1">SsrA-binding protein</fullName>
    </recommendedName>
    <alternativeName>
        <fullName evidence="1">Small protein B</fullName>
    </alternativeName>
</protein>
<accession>Q03LI8</accession>
<dbReference type="EMBL" id="CP000419">
    <property type="protein sequence ID" value="ABJ65934.1"/>
    <property type="molecule type" value="Genomic_DNA"/>
</dbReference>
<dbReference type="RefSeq" id="WP_002950240.1">
    <property type="nucleotide sequence ID" value="NZ_CP086001.1"/>
</dbReference>
<dbReference type="SMR" id="Q03LI8"/>
<dbReference type="GeneID" id="66898533"/>
<dbReference type="KEGG" id="ste:STER_0675"/>
<dbReference type="HOGENOM" id="CLU_108953_0_0_9"/>
<dbReference type="GO" id="GO:0005829">
    <property type="term" value="C:cytosol"/>
    <property type="evidence" value="ECO:0007669"/>
    <property type="project" value="TreeGrafter"/>
</dbReference>
<dbReference type="GO" id="GO:0003723">
    <property type="term" value="F:RNA binding"/>
    <property type="evidence" value="ECO:0007669"/>
    <property type="project" value="UniProtKB-UniRule"/>
</dbReference>
<dbReference type="GO" id="GO:0070929">
    <property type="term" value="P:trans-translation"/>
    <property type="evidence" value="ECO:0007669"/>
    <property type="project" value="UniProtKB-UniRule"/>
</dbReference>
<dbReference type="CDD" id="cd09294">
    <property type="entry name" value="SmpB"/>
    <property type="match status" value="1"/>
</dbReference>
<dbReference type="Gene3D" id="2.40.280.10">
    <property type="match status" value="1"/>
</dbReference>
<dbReference type="HAMAP" id="MF_00023">
    <property type="entry name" value="SmpB"/>
    <property type="match status" value="1"/>
</dbReference>
<dbReference type="InterPro" id="IPR023620">
    <property type="entry name" value="SmpB"/>
</dbReference>
<dbReference type="InterPro" id="IPR000037">
    <property type="entry name" value="SsrA-bd_prot"/>
</dbReference>
<dbReference type="InterPro" id="IPR020081">
    <property type="entry name" value="SsrA-bd_prot_CS"/>
</dbReference>
<dbReference type="NCBIfam" id="NF003843">
    <property type="entry name" value="PRK05422.1"/>
    <property type="match status" value="1"/>
</dbReference>
<dbReference type="NCBIfam" id="TIGR00086">
    <property type="entry name" value="smpB"/>
    <property type="match status" value="1"/>
</dbReference>
<dbReference type="PANTHER" id="PTHR30308:SF2">
    <property type="entry name" value="SSRA-BINDING PROTEIN"/>
    <property type="match status" value="1"/>
</dbReference>
<dbReference type="PANTHER" id="PTHR30308">
    <property type="entry name" value="TMRNA-BINDING COMPONENT OF TRANS-TRANSLATION TAGGING COMPLEX"/>
    <property type="match status" value="1"/>
</dbReference>
<dbReference type="Pfam" id="PF01668">
    <property type="entry name" value="SmpB"/>
    <property type="match status" value="1"/>
</dbReference>
<dbReference type="SUPFAM" id="SSF74982">
    <property type="entry name" value="Small protein B (SmpB)"/>
    <property type="match status" value="1"/>
</dbReference>
<dbReference type="PROSITE" id="PS01317">
    <property type="entry name" value="SSRP"/>
    <property type="match status" value="1"/>
</dbReference>
<reference key="1">
    <citation type="journal article" date="2006" name="Proc. Natl. Acad. Sci. U.S.A.">
        <title>Comparative genomics of the lactic acid bacteria.</title>
        <authorList>
            <person name="Makarova K.S."/>
            <person name="Slesarev A."/>
            <person name="Wolf Y.I."/>
            <person name="Sorokin A."/>
            <person name="Mirkin B."/>
            <person name="Koonin E.V."/>
            <person name="Pavlov A."/>
            <person name="Pavlova N."/>
            <person name="Karamychev V."/>
            <person name="Polouchine N."/>
            <person name="Shakhova V."/>
            <person name="Grigoriev I."/>
            <person name="Lou Y."/>
            <person name="Rohksar D."/>
            <person name="Lucas S."/>
            <person name="Huang K."/>
            <person name="Goodstein D.M."/>
            <person name="Hawkins T."/>
            <person name="Plengvidhya V."/>
            <person name="Welker D."/>
            <person name="Hughes J."/>
            <person name="Goh Y."/>
            <person name="Benson A."/>
            <person name="Baldwin K."/>
            <person name="Lee J.-H."/>
            <person name="Diaz-Muniz I."/>
            <person name="Dosti B."/>
            <person name="Smeianov V."/>
            <person name="Wechter W."/>
            <person name="Barabote R."/>
            <person name="Lorca G."/>
            <person name="Altermann E."/>
            <person name="Barrangou R."/>
            <person name="Ganesan B."/>
            <person name="Xie Y."/>
            <person name="Rawsthorne H."/>
            <person name="Tamir D."/>
            <person name="Parker C."/>
            <person name="Breidt F."/>
            <person name="Broadbent J.R."/>
            <person name="Hutkins R."/>
            <person name="O'Sullivan D."/>
            <person name="Steele J."/>
            <person name="Unlu G."/>
            <person name="Saier M.H. Jr."/>
            <person name="Klaenhammer T."/>
            <person name="Richardson P."/>
            <person name="Kozyavkin S."/>
            <person name="Weimer B.C."/>
            <person name="Mills D.A."/>
        </authorList>
    </citation>
    <scope>NUCLEOTIDE SEQUENCE [LARGE SCALE GENOMIC DNA]</scope>
    <source>
        <strain>ATCC BAA-491 / LMD-9</strain>
    </source>
</reference>